<name>ATPB_PSEPF</name>
<comment type="function">
    <text evidence="1">Produces ATP from ADP in the presence of a proton gradient across the membrane. The catalytic sites are hosted primarily by the beta subunits.</text>
</comment>
<comment type="catalytic activity">
    <reaction evidence="1">
        <text>ATP + H2O + 4 H(+)(in) = ADP + phosphate + 5 H(+)(out)</text>
        <dbReference type="Rhea" id="RHEA:57720"/>
        <dbReference type="ChEBI" id="CHEBI:15377"/>
        <dbReference type="ChEBI" id="CHEBI:15378"/>
        <dbReference type="ChEBI" id="CHEBI:30616"/>
        <dbReference type="ChEBI" id="CHEBI:43474"/>
        <dbReference type="ChEBI" id="CHEBI:456216"/>
        <dbReference type="EC" id="7.1.2.2"/>
    </reaction>
</comment>
<comment type="subunit">
    <text evidence="1">F-type ATPases have 2 components, CF(1) - the catalytic core - and CF(0) - the membrane proton channel. CF(1) has five subunits: alpha(3), beta(3), gamma(1), delta(1), epsilon(1). CF(0) has three main subunits: a(1), b(2) and c(9-12). The alpha and beta chains form an alternating ring which encloses part of the gamma chain. CF(1) is attached to CF(0) by a central stalk formed by the gamma and epsilon chains, while a peripheral stalk is formed by the delta and b chains.</text>
</comment>
<comment type="subcellular location">
    <subcellularLocation>
        <location evidence="1">Cell inner membrane</location>
        <topology evidence="1">Peripheral membrane protein</topology>
    </subcellularLocation>
</comment>
<comment type="similarity">
    <text evidence="1">Belongs to the ATPase alpha/beta chains family.</text>
</comment>
<proteinExistence type="inferred from homology"/>
<organism>
    <name type="scientific">Pseudomonas fluorescens (strain Pf0-1)</name>
    <dbReference type="NCBI Taxonomy" id="205922"/>
    <lineage>
        <taxon>Bacteria</taxon>
        <taxon>Pseudomonadati</taxon>
        <taxon>Pseudomonadota</taxon>
        <taxon>Gammaproteobacteria</taxon>
        <taxon>Pseudomonadales</taxon>
        <taxon>Pseudomonadaceae</taxon>
        <taxon>Pseudomonas</taxon>
    </lineage>
</organism>
<sequence length="458" mass="49445">MSSGRIVQIIGAVIDVEFPRDSVPSIYDALKVQGAETTLEVQQQLGDGVVRTIAMGSTEGLKRGLDVNNTGAAISVPVGKATLGRIMDVLGNPIDEAGPIGEEERWGIHRAAPSFAEQAGGNELLETGIKVIDLVCPFAKGGKVGLFGGAGVGKTVNMMELIRNIAIEHSGYSVFAGVGERTREGNDFYHEMKDSNVLDKVALVYGQMNEPPGNRLRVALTGLTMAEKFRDEGNDVLLFVDNIYRYTLAGTEVSALLGRMPSAVGYQPTLAEEMGVLQERITSTKQGSITSIQAVYVPADDLTDPSPATTFAHLDATVVLSRDIASLGIYPAVDPLDSTSRQLDPNVIGNDHYETARGVQYVLQRYKELKDIIAILGMDELSEADKQLVNRARKIQRFLSQPFFVAEVFTGASGKYVSLKDTIAGFKGILNGDYDHLPEQAFYMVGGIEEAIEKAKKL</sequence>
<gene>
    <name evidence="1" type="primary">atpD</name>
    <name type="ordered locus">Pfl01_5730</name>
</gene>
<dbReference type="EC" id="7.1.2.2" evidence="1"/>
<dbReference type="EMBL" id="CP000094">
    <property type="protein sequence ID" value="ABA77463.1"/>
    <property type="molecule type" value="Genomic_DNA"/>
</dbReference>
<dbReference type="RefSeq" id="WP_007954162.1">
    <property type="nucleotide sequence ID" value="NC_007492.2"/>
</dbReference>
<dbReference type="SMR" id="Q3K441"/>
<dbReference type="KEGG" id="pfo:Pfl01_5730"/>
<dbReference type="eggNOG" id="COG0055">
    <property type="taxonomic scope" value="Bacteria"/>
</dbReference>
<dbReference type="HOGENOM" id="CLU_022398_0_2_6"/>
<dbReference type="Proteomes" id="UP000002704">
    <property type="component" value="Chromosome"/>
</dbReference>
<dbReference type="GO" id="GO:0005886">
    <property type="term" value="C:plasma membrane"/>
    <property type="evidence" value="ECO:0007669"/>
    <property type="project" value="UniProtKB-SubCell"/>
</dbReference>
<dbReference type="GO" id="GO:0045259">
    <property type="term" value="C:proton-transporting ATP synthase complex"/>
    <property type="evidence" value="ECO:0007669"/>
    <property type="project" value="UniProtKB-KW"/>
</dbReference>
<dbReference type="GO" id="GO:0005524">
    <property type="term" value="F:ATP binding"/>
    <property type="evidence" value="ECO:0007669"/>
    <property type="project" value="UniProtKB-UniRule"/>
</dbReference>
<dbReference type="GO" id="GO:0016887">
    <property type="term" value="F:ATP hydrolysis activity"/>
    <property type="evidence" value="ECO:0007669"/>
    <property type="project" value="InterPro"/>
</dbReference>
<dbReference type="GO" id="GO:0046933">
    <property type="term" value="F:proton-transporting ATP synthase activity, rotational mechanism"/>
    <property type="evidence" value="ECO:0007669"/>
    <property type="project" value="UniProtKB-UniRule"/>
</dbReference>
<dbReference type="CDD" id="cd18110">
    <property type="entry name" value="ATP-synt_F1_beta_C"/>
    <property type="match status" value="1"/>
</dbReference>
<dbReference type="CDD" id="cd18115">
    <property type="entry name" value="ATP-synt_F1_beta_N"/>
    <property type="match status" value="1"/>
</dbReference>
<dbReference type="CDD" id="cd01133">
    <property type="entry name" value="F1-ATPase_beta_CD"/>
    <property type="match status" value="1"/>
</dbReference>
<dbReference type="FunFam" id="1.10.1140.10:FF:000001">
    <property type="entry name" value="ATP synthase subunit beta"/>
    <property type="match status" value="1"/>
</dbReference>
<dbReference type="FunFam" id="2.40.10.170:FF:000003">
    <property type="entry name" value="ATP synthase subunit beta"/>
    <property type="match status" value="1"/>
</dbReference>
<dbReference type="FunFam" id="3.40.50.300:FF:000004">
    <property type="entry name" value="ATP synthase subunit beta"/>
    <property type="match status" value="1"/>
</dbReference>
<dbReference type="Gene3D" id="2.40.10.170">
    <property type="match status" value="1"/>
</dbReference>
<dbReference type="Gene3D" id="1.10.1140.10">
    <property type="entry name" value="Bovine Mitochondrial F1-atpase, Atp Synthase Beta Chain, Chain D, domain 3"/>
    <property type="match status" value="1"/>
</dbReference>
<dbReference type="Gene3D" id="3.40.50.300">
    <property type="entry name" value="P-loop containing nucleotide triphosphate hydrolases"/>
    <property type="match status" value="1"/>
</dbReference>
<dbReference type="HAMAP" id="MF_01347">
    <property type="entry name" value="ATP_synth_beta_bact"/>
    <property type="match status" value="1"/>
</dbReference>
<dbReference type="InterPro" id="IPR003593">
    <property type="entry name" value="AAA+_ATPase"/>
</dbReference>
<dbReference type="InterPro" id="IPR055190">
    <property type="entry name" value="ATP-synt_VA_C"/>
</dbReference>
<dbReference type="InterPro" id="IPR005722">
    <property type="entry name" value="ATP_synth_F1_bsu"/>
</dbReference>
<dbReference type="InterPro" id="IPR020003">
    <property type="entry name" value="ATPase_a/bsu_AS"/>
</dbReference>
<dbReference type="InterPro" id="IPR050053">
    <property type="entry name" value="ATPase_alpha/beta_chains"/>
</dbReference>
<dbReference type="InterPro" id="IPR004100">
    <property type="entry name" value="ATPase_F1/V1/A1_a/bsu_N"/>
</dbReference>
<dbReference type="InterPro" id="IPR036121">
    <property type="entry name" value="ATPase_F1/V1/A1_a/bsu_N_sf"/>
</dbReference>
<dbReference type="InterPro" id="IPR000194">
    <property type="entry name" value="ATPase_F1/V1/A1_a/bsu_nucl-bd"/>
</dbReference>
<dbReference type="InterPro" id="IPR024034">
    <property type="entry name" value="ATPase_F1/V1_b/a_C"/>
</dbReference>
<dbReference type="InterPro" id="IPR027417">
    <property type="entry name" value="P-loop_NTPase"/>
</dbReference>
<dbReference type="NCBIfam" id="TIGR01039">
    <property type="entry name" value="atpD"/>
    <property type="match status" value="1"/>
</dbReference>
<dbReference type="PANTHER" id="PTHR15184">
    <property type="entry name" value="ATP SYNTHASE"/>
    <property type="match status" value="1"/>
</dbReference>
<dbReference type="PANTHER" id="PTHR15184:SF71">
    <property type="entry name" value="ATP SYNTHASE SUBUNIT BETA, MITOCHONDRIAL"/>
    <property type="match status" value="1"/>
</dbReference>
<dbReference type="Pfam" id="PF00006">
    <property type="entry name" value="ATP-synt_ab"/>
    <property type="match status" value="1"/>
</dbReference>
<dbReference type="Pfam" id="PF02874">
    <property type="entry name" value="ATP-synt_ab_N"/>
    <property type="match status" value="1"/>
</dbReference>
<dbReference type="Pfam" id="PF22919">
    <property type="entry name" value="ATP-synt_VA_C"/>
    <property type="match status" value="1"/>
</dbReference>
<dbReference type="SMART" id="SM00382">
    <property type="entry name" value="AAA"/>
    <property type="match status" value="1"/>
</dbReference>
<dbReference type="SUPFAM" id="SSF47917">
    <property type="entry name" value="C-terminal domain of alpha and beta subunits of F1 ATP synthase"/>
    <property type="match status" value="1"/>
</dbReference>
<dbReference type="SUPFAM" id="SSF50615">
    <property type="entry name" value="N-terminal domain of alpha and beta subunits of F1 ATP synthase"/>
    <property type="match status" value="1"/>
</dbReference>
<dbReference type="SUPFAM" id="SSF52540">
    <property type="entry name" value="P-loop containing nucleoside triphosphate hydrolases"/>
    <property type="match status" value="1"/>
</dbReference>
<dbReference type="PROSITE" id="PS00152">
    <property type="entry name" value="ATPASE_ALPHA_BETA"/>
    <property type="match status" value="1"/>
</dbReference>
<keyword id="KW-0066">ATP synthesis</keyword>
<keyword id="KW-0067">ATP-binding</keyword>
<keyword id="KW-0997">Cell inner membrane</keyword>
<keyword id="KW-1003">Cell membrane</keyword>
<keyword id="KW-0139">CF(1)</keyword>
<keyword id="KW-0375">Hydrogen ion transport</keyword>
<keyword id="KW-0406">Ion transport</keyword>
<keyword id="KW-0472">Membrane</keyword>
<keyword id="KW-0547">Nucleotide-binding</keyword>
<keyword id="KW-1278">Translocase</keyword>
<keyword id="KW-0813">Transport</keyword>
<feature type="chain" id="PRO_0000254340" description="ATP synthase subunit beta">
    <location>
        <begin position="1"/>
        <end position="458"/>
    </location>
</feature>
<feature type="binding site" evidence="1">
    <location>
        <begin position="148"/>
        <end position="155"/>
    </location>
    <ligand>
        <name>ATP</name>
        <dbReference type="ChEBI" id="CHEBI:30616"/>
    </ligand>
</feature>
<reference key="1">
    <citation type="journal article" date="2009" name="Genome Biol.">
        <title>Genomic and genetic analyses of diversity and plant interactions of Pseudomonas fluorescens.</title>
        <authorList>
            <person name="Silby M.W."/>
            <person name="Cerdeno-Tarraga A.M."/>
            <person name="Vernikos G.S."/>
            <person name="Giddens S.R."/>
            <person name="Jackson R.W."/>
            <person name="Preston G.M."/>
            <person name="Zhang X.-X."/>
            <person name="Moon C.D."/>
            <person name="Gehrig S.M."/>
            <person name="Godfrey S.A.C."/>
            <person name="Knight C.G."/>
            <person name="Malone J.G."/>
            <person name="Robinson Z."/>
            <person name="Spiers A.J."/>
            <person name="Harris S."/>
            <person name="Challis G.L."/>
            <person name="Yaxley A.M."/>
            <person name="Harris D."/>
            <person name="Seeger K."/>
            <person name="Murphy L."/>
            <person name="Rutter S."/>
            <person name="Squares R."/>
            <person name="Quail M.A."/>
            <person name="Saunders E."/>
            <person name="Mavromatis K."/>
            <person name="Brettin T.S."/>
            <person name="Bentley S.D."/>
            <person name="Hothersall J."/>
            <person name="Stephens E."/>
            <person name="Thomas C.M."/>
            <person name="Parkhill J."/>
            <person name="Levy S.B."/>
            <person name="Rainey P.B."/>
            <person name="Thomson N.R."/>
        </authorList>
    </citation>
    <scope>NUCLEOTIDE SEQUENCE [LARGE SCALE GENOMIC DNA]</scope>
    <source>
        <strain>Pf0-1</strain>
    </source>
</reference>
<evidence type="ECO:0000255" key="1">
    <source>
        <dbReference type="HAMAP-Rule" id="MF_01347"/>
    </source>
</evidence>
<protein>
    <recommendedName>
        <fullName evidence="1">ATP synthase subunit beta</fullName>
        <ecNumber evidence="1">7.1.2.2</ecNumber>
    </recommendedName>
    <alternativeName>
        <fullName evidence="1">ATP synthase F1 sector subunit beta</fullName>
    </alternativeName>
    <alternativeName>
        <fullName evidence="1">F-ATPase subunit beta</fullName>
    </alternativeName>
</protein>
<accession>Q3K441</accession>